<gene>
    <name evidence="1" type="primary">gltX</name>
    <name type="ordered locus">Shewana3_1418</name>
</gene>
<dbReference type="EC" id="6.1.1.17" evidence="1"/>
<dbReference type="EMBL" id="CP000469">
    <property type="protein sequence ID" value="ABK47652.1"/>
    <property type="molecule type" value="Genomic_DNA"/>
</dbReference>
<dbReference type="RefSeq" id="WP_011625747.1">
    <property type="nucleotide sequence ID" value="NC_008577.1"/>
</dbReference>
<dbReference type="SMR" id="A0KV33"/>
<dbReference type="STRING" id="94122.Shewana3_1418"/>
<dbReference type="GeneID" id="94727399"/>
<dbReference type="KEGG" id="shn:Shewana3_1418"/>
<dbReference type="eggNOG" id="COG0008">
    <property type="taxonomic scope" value="Bacteria"/>
</dbReference>
<dbReference type="HOGENOM" id="CLU_015768_6_3_6"/>
<dbReference type="OrthoDB" id="9807503at2"/>
<dbReference type="Proteomes" id="UP000002589">
    <property type="component" value="Chromosome"/>
</dbReference>
<dbReference type="GO" id="GO:0005829">
    <property type="term" value="C:cytosol"/>
    <property type="evidence" value="ECO:0007669"/>
    <property type="project" value="TreeGrafter"/>
</dbReference>
<dbReference type="GO" id="GO:0005524">
    <property type="term" value="F:ATP binding"/>
    <property type="evidence" value="ECO:0007669"/>
    <property type="project" value="UniProtKB-UniRule"/>
</dbReference>
<dbReference type="GO" id="GO:0004818">
    <property type="term" value="F:glutamate-tRNA ligase activity"/>
    <property type="evidence" value="ECO:0007669"/>
    <property type="project" value="UniProtKB-UniRule"/>
</dbReference>
<dbReference type="GO" id="GO:0000049">
    <property type="term" value="F:tRNA binding"/>
    <property type="evidence" value="ECO:0007669"/>
    <property type="project" value="InterPro"/>
</dbReference>
<dbReference type="GO" id="GO:0008270">
    <property type="term" value="F:zinc ion binding"/>
    <property type="evidence" value="ECO:0007669"/>
    <property type="project" value="UniProtKB-UniRule"/>
</dbReference>
<dbReference type="GO" id="GO:0006424">
    <property type="term" value="P:glutamyl-tRNA aminoacylation"/>
    <property type="evidence" value="ECO:0007669"/>
    <property type="project" value="UniProtKB-UniRule"/>
</dbReference>
<dbReference type="CDD" id="cd00808">
    <property type="entry name" value="GluRS_core"/>
    <property type="match status" value="1"/>
</dbReference>
<dbReference type="FunFam" id="1.10.10.350:FF:000001">
    <property type="entry name" value="Glutamate--tRNA ligase"/>
    <property type="match status" value="1"/>
</dbReference>
<dbReference type="FunFam" id="3.40.50.620:FF:000007">
    <property type="entry name" value="Glutamate--tRNA ligase"/>
    <property type="match status" value="1"/>
</dbReference>
<dbReference type="Gene3D" id="1.10.10.350">
    <property type="match status" value="1"/>
</dbReference>
<dbReference type="Gene3D" id="3.40.50.620">
    <property type="entry name" value="HUPs"/>
    <property type="match status" value="1"/>
</dbReference>
<dbReference type="HAMAP" id="MF_00022">
    <property type="entry name" value="Glu_tRNA_synth_type1"/>
    <property type="match status" value="1"/>
</dbReference>
<dbReference type="InterPro" id="IPR045462">
    <property type="entry name" value="aa-tRNA-synth_I_cd-bd"/>
</dbReference>
<dbReference type="InterPro" id="IPR020751">
    <property type="entry name" value="aa-tRNA-synth_I_codon-bd_sub2"/>
</dbReference>
<dbReference type="InterPro" id="IPR001412">
    <property type="entry name" value="aa-tRNA-synth_I_CS"/>
</dbReference>
<dbReference type="InterPro" id="IPR008925">
    <property type="entry name" value="aa_tRNA-synth_I_cd-bd_sf"/>
</dbReference>
<dbReference type="InterPro" id="IPR004527">
    <property type="entry name" value="Glu-tRNA-ligase_bac/mito"/>
</dbReference>
<dbReference type="InterPro" id="IPR000924">
    <property type="entry name" value="Glu/Gln-tRNA-synth"/>
</dbReference>
<dbReference type="InterPro" id="IPR020058">
    <property type="entry name" value="Glu/Gln-tRNA-synth_Ib_cat-dom"/>
</dbReference>
<dbReference type="InterPro" id="IPR049940">
    <property type="entry name" value="GluQ/Sye"/>
</dbReference>
<dbReference type="InterPro" id="IPR033910">
    <property type="entry name" value="GluRS_core"/>
</dbReference>
<dbReference type="InterPro" id="IPR014729">
    <property type="entry name" value="Rossmann-like_a/b/a_fold"/>
</dbReference>
<dbReference type="NCBIfam" id="TIGR00464">
    <property type="entry name" value="gltX_bact"/>
    <property type="match status" value="1"/>
</dbReference>
<dbReference type="PANTHER" id="PTHR43311">
    <property type="entry name" value="GLUTAMATE--TRNA LIGASE"/>
    <property type="match status" value="1"/>
</dbReference>
<dbReference type="PANTHER" id="PTHR43311:SF2">
    <property type="entry name" value="GLUTAMATE--TRNA LIGASE, MITOCHONDRIAL-RELATED"/>
    <property type="match status" value="1"/>
</dbReference>
<dbReference type="Pfam" id="PF19269">
    <property type="entry name" value="Anticodon_2"/>
    <property type="match status" value="1"/>
</dbReference>
<dbReference type="Pfam" id="PF00749">
    <property type="entry name" value="tRNA-synt_1c"/>
    <property type="match status" value="1"/>
</dbReference>
<dbReference type="PRINTS" id="PR00987">
    <property type="entry name" value="TRNASYNTHGLU"/>
</dbReference>
<dbReference type="SUPFAM" id="SSF48163">
    <property type="entry name" value="An anticodon-binding domain of class I aminoacyl-tRNA synthetases"/>
    <property type="match status" value="1"/>
</dbReference>
<dbReference type="SUPFAM" id="SSF52374">
    <property type="entry name" value="Nucleotidylyl transferase"/>
    <property type="match status" value="1"/>
</dbReference>
<dbReference type="PROSITE" id="PS00178">
    <property type="entry name" value="AA_TRNA_LIGASE_I"/>
    <property type="match status" value="1"/>
</dbReference>
<protein>
    <recommendedName>
        <fullName evidence="1">Glutamate--tRNA ligase</fullName>
        <ecNumber evidence="1">6.1.1.17</ecNumber>
    </recommendedName>
    <alternativeName>
        <fullName evidence="1">Glutamyl-tRNA synthetase</fullName>
        <shortName evidence="1">GluRS</shortName>
    </alternativeName>
</protein>
<accession>A0KV33</accession>
<reference key="1">
    <citation type="submission" date="2006-09" db="EMBL/GenBank/DDBJ databases">
        <title>Complete sequence of chromosome 1 of Shewanella sp. ANA-3.</title>
        <authorList>
            <person name="Copeland A."/>
            <person name="Lucas S."/>
            <person name="Lapidus A."/>
            <person name="Barry K."/>
            <person name="Detter J.C."/>
            <person name="Glavina del Rio T."/>
            <person name="Hammon N."/>
            <person name="Israni S."/>
            <person name="Dalin E."/>
            <person name="Tice H."/>
            <person name="Pitluck S."/>
            <person name="Chertkov O."/>
            <person name="Brettin T."/>
            <person name="Bruce D."/>
            <person name="Han C."/>
            <person name="Tapia R."/>
            <person name="Gilna P."/>
            <person name="Schmutz J."/>
            <person name="Larimer F."/>
            <person name="Land M."/>
            <person name="Hauser L."/>
            <person name="Kyrpides N."/>
            <person name="Kim E."/>
            <person name="Newman D."/>
            <person name="Salticov C."/>
            <person name="Konstantinidis K."/>
            <person name="Klappenback J."/>
            <person name="Tiedje J."/>
            <person name="Richardson P."/>
        </authorList>
    </citation>
    <scope>NUCLEOTIDE SEQUENCE [LARGE SCALE GENOMIC DNA]</scope>
    <source>
        <strain>ANA-3</strain>
    </source>
</reference>
<feature type="chain" id="PRO_1000001961" description="Glutamate--tRNA ligase">
    <location>
        <begin position="1"/>
        <end position="469"/>
    </location>
</feature>
<feature type="short sequence motif" description="'HIGH' region" evidence="1">
    <location>
        <begin position="9"/>
        <end position="19"/>
    </location>
</feature>
<feature type="short sequence motif" description="'KMSKS' region" evidence="1">
    <location>
        <begin position="236"/>
        <end position="240"/>
    </location>
</feature>
<feature type="binding site" evidence="1">
    <location>
        <position position="98"/>
    </location>
    <ligand>
        <name>Zn(2+)</name>
        <dbReference type="ChEBI" id="CHEBI:29105"/>
    </ligand>
</feature>
<feature type="binding site" evidence="1">
    <location>
        <position position="100"/>
    </location>
    <ligand>
        <name>Zn(2+)</name>
        <dbReference type="ChEBI" id="CHEBI:29105"/>
    </ligand>
</feature>
<feature type="binding site" evidence="1">
    <location>
        <position position="125"/>
    </location>
    <ligand>
        <name>Zn(2+)</name>
        <dbReference type="ChEBI" id="CHEBI:29105"/>
    </ligand>
</feature>
<feature type="binding site" evidence="1">
    <location>
        <position position="127"/>
    </location>
    <ligand>
        <name>Zn(2+)</name>
        <dbReference type="ChEBI" id="CHEBI:29105"/>
    </ligand>
</feature>
<feature type="binding site" evidence="1">
    <location>
        <position position="239"/>
    </location>
    <ligand>
        <name>ATP</name>
        <dbReference type="ChEBI" id="CHEBI:30616"/>
    </ligand>
</feature>
<keyword id="KW-0030">Aminoacyl-tRNA synthetase</keyword>
<keyword id="KW-0067">ATP-binding</keyword>
<keyword id="KW-0963">Cytoplasm</keyword>
<keyword id="KW-0436">Ligase</keyword>
<keyword id="KW-0479">Metal-binding</keyword>
<keyword id="KW-0547">Nucleotide-binding</keyword>
<keyword id="KW-0648">Protein biosynthesis</keyword>
<keyword id="KW-0862">Zinc</keyword>
<evidence type="ECO:0000255" key="1">
    <source>
        <dbReference type="HAMAP-Rule" id="MF_00022"/>
    </source>
</evidence>
<proteinExistence type="inferred from homology"/>
<comment type="function">
    <text evidence="1">Catalyzes the attachment of glutamate to tRNA(Glu) in a two-step reaction: glutamate is first activated by ATP to form Glu-AMP and then transferred to the acceptor end of tRNA(Glu).</text>
</comment>
<comment type="catalytic activity">
    <reaction evidence="1">
        <text>tRNA(Glu) + L-glutamate + ATP = L-glutamyl-tRNA(Glu) + AMP + diphosphate</text>
        <dbReference type="Rhea" id="RHEA:23540"/>
        <dbReference type="Rhea" id="RHEA-COMP:9663"/>
        <dbReference type="Rhea" id="RHEA-COMP:9680"/>
        <dbReference type="ChEBI" id="CHEBI:29985"/>
        <dbReference type="ChEBI" id="CHEBI:30616"/>
        <dbReference type="ChEBI" id="CHEBI:33019"/>
        <dbReference type="ChEBI" id="CHEBI:78442"/>
        <dbReference type="ChEBI" id="CHEBI:78520"/>
        <dbReference type="ChEBI" id="CHEBI:456215"/>
        <dbReference type="EC" id="6.1.1.17"/>
    </reaction>
</comment>
<comment type="cofactor">
    <cofactor evidence="1">
        <name>Zn(2+)</name>
        <dbReference type="ChEBI" id="CHEBI:29105"/>
    </cofactor>
    <text evidence="1">Binds 1 zinc ion per subunit.</text>
</comment>
<comment type="subunit">
    <text evidence="1">Monomer.</text>
</comment>
<comment type="subcellular location">
    <subcellularLocation>
        <location evidence="1">Cytoplasm</location>
    </subcellularLocation>
</comment>
<comment type="similarity">
    <text evidence="1">Belongs to the class-I aminoacyl-tRNA synthetase family. Glutamate--tRNA ligase type 1 subfamily.</text>
</comment>
<name>SYE_SHESA</name>
<sequence>MTTKTRFAPSPTGFLHVGGARTALYSWLQARANNGEFVLRIEDTDIERSTQAACDAILEGMNWLGLTWDEGPYYQTKRFDRYNEIIAQMLEQGTAYKCYCSRERIDALREAQAANGEAQKYDGCCRDLPARDTDEPFVVRFKNPIGGSVVFDDHVRGRIEFSNDALDDLIIARTDGVPTYNFCVVVDDWDMGITCVVRGEDHINNTPRQINILKALGAPIPEYAHVSMILGDDGAKLSKRHGAVSVMQYRDDGYLPEALLNYLVRLGWSHGDQEVFSLEEMKQLFKLDDINKAPSAFNTEKLVWLNQHYIKTLDPEYVASHLQWHMDDQKIDTSNGPALSAVVTALAERAKTLKELAASSRYFYEDFAEFDAEQAKKHLRGVALEPLQLVQQKLAALTEWTVEAIHQAIEATATELEVGMGKVGMPLRVAVTGAGQSPGLDITLFLIGKARSEQRISKAIEFVADRINS</sequence>
<organism>
    <name type="scientific">Shewanella sp. (strain ANA-3)</name>
    <dbReference type="NCBI Taxonomy" id="94122"/>
    <lineage>
        <taxon>Bacteria</taxon>
        <taxon>Pseudomonadati</taxon>
        <taxon>Pseudomonadota</taxon>
        <taxon>Gammaproteobacteria</taxon>
        <taxon>Alteromonadales</taxon>
        <taxon>Shewanellaceae</taxon>
        <taxon>Shewanella</taxon>
    </lineage>
</organism>